<sequence length="253" mass="30248">MYLFIYIFFFFFFFFFFVIVQKDIEQLDIKCAHEQMNIQKQYDEKKKPLFEKRDEIIQKIPGFWANTLRKHPALSDIVPEDIDILNHLVKLDLKDNMDNNGSYKITFIFGEKAKEFMEPLTLVKHVTFDNNQEKVVECTRIKWKEGKNPIAAVTHNRSDLDNEIPKWSIFEWFTTDELQDKPDVGELIRREIWHNPLSYYLGLEEFDEFDDDFDEEFDDDDDDDDDDDDDDDDDDKDDDLDGDDDGNNDDNDD</sequence>
<organism>
    <name type="scientific">Plasmodium falciparum (isolate fcm17 / Senegal)</name>
    <dbReference type="NCBI Taxonomy" id="5845"/>
    <lineage>
        <taxon>Eukaryota</taxon>
        <taxon>Sar</taxon>
        <taxon>Alveolata</taxon>
        <taxon>Apicomplexa</taxon>
        <taxon>Aconoidasida</taxon>
        <taxon>Haemosporida</taxon>
        <taxon>Plasmodiidae</taxon>
        <taxon>Plasmodium</taxon>
        <taxon>Plasmodium (Laverania)</taxon>
    </lineage>
</organism>
<proteinExistence type="inferred from homology"/>
<comment type="miscellaneous">
    <text>This protein is coded on the reverse strand of a histidine-rich protein.</text>
</comment>
<comment type="similarity">
    <text evidence="3">Belongs to the nucleosome assembly protein (NAP) family.</text>
</comment>
<dbReference type="EMBL" id="M17028">
    <property type="protein sequence ID" value="AAA29620.1"/>
    <property type="molecule type" value="Genomic_DNA"/>
</dbReference>
<dbReference type="PIR" id="B29653">
    <property type="entry name" value="B29653"/>
</dbReference>
<dbReference type="SMR" id="P13825"/>
<dbReference type="GO" id="GO:0005634">
    <property type="term" value="C:nucleus"/>
    <property type="evidence" value="ECO:0007669"/>
    <property type="project" value="InterPro"/>
</dbReference>
<dbReference type="GO" id="GO:0006334">
    <property type="term" value="P:nucleosome assembly"/>
    <property type="evidence" value="ECO:0007669"/>
    <property type="project" value="InterPro"/>
</dbReference>
<dbReference type="GO" id="GO:0051262">
    <property type="term" value="P:protein tetramerization"/>
    <property type="evidence" value="ECO:0007669"/>
    <property type="project" value="InterPro"/>
</dbReference>
<dbReference type="FunFam" id="3.30.1120.90:FF:000006">
    <property type="entry name" value="Nucleosome assembly protein"/>
    <property type="match status" value="1"/>
</dbReference>
<dbReference type="Gene3D" id="3.30.1120.90">
    <property type="entry name" value="Nucleosome assembly protein"/>
    <property type="match status" value="1"/>
</dbReference>
<dbReference type="Gene3D" id="4.10.170.10">
    <property type="entry name" value="p53-like tetramerisation domain"/>
    <property type="match status" value="1"/>
</dbReference>
<dbReference type="InterPro" id="IPR037231">
    <property type="entry name" value="NAP-like_sf"/>
</dbReference>
<dbReference type="InterPro" id="IPR002164">
    <property type="entry name" value="NAP_family"/>
</dbReference>
<dbReference type="InterPro" id="IPR036674">
    <property type="entry name" value="p53_tetramer_sf"/>
</dbReference>
<dbReference type="PANTHER" id="PTHR11875">
    <property type="entry name" value="TESTIS-SPECIFIC Y-ENCODED PROTEIN"/>
    <property type="match status" value="1"/>
</dbReference>
<dbReference type="Pfam" id="PF00956">
    <property type="entry name" value="NAP"/>
    <property type="match status" value="1"/>
</dbReference>
<dbReference type="SUPFAM" id="SSF143113">
    <property type="entry name" value="NAP-like"/>
    <property type="match status" value="1"/>
</dbReference>
<evidence type="ECO:0000255" key="1"/>
<evidence type="ECO:0000256" key="2">
    <source>
        <dbReference type="SAM" id="MobiDB-lite"/>
    </source>
</evidence>
<evidence type="ECO:0000305" key="3"/>
<keyword id="KW-0461">Malaria</keyword>
<keyword id="KW-0732">Signal</keyword>
<accession>P13825</accession>
<feature type="signal peptide" evidence="1">
    <location>
        <begin position="1"/>
        <end position="22"/>
    </location>
</feature>
<feature type="chain" id="PRO_0000019388" description="Aspartic acid-rich protein">
    <location>
        <begin position="23"/>
        <end position="253"/>
    </location>
</feature>
<feature type="region of interest" description="Disordered" evidence="2">
    <location>
        <begin position="211"/>
        <end position="253"/>
    </location>
</feature>
<protein>
    <recommendedName>
        <fullName>Aspartic acid-rich protein</fullName>
    </recommendedName>
</protein>
<name>ASP_PLAFS</name>
<reference key="1">
    <citation type="journal article" date="1987" name="Biochem. Biophys. Res. Commun.">
        <title>Cloning and sequencing of Plasmodium falciparum DNA fragments containing repetitive regions potentially coding for histidine-rich proteins: identification of two overlapping reading frames.</title>
        <authorList>
            <person name="Lenstra R."/>
            <person name="D'Auriol L."/>
            <person name="Andrieu B."/>
            <person name="le Bras J."/>
            <person name="Galibert F."/>
        </authorList>
    </citation>
    <scope>NUCLEOTIDE SEQUENCE [GENOMIC DNA]</scope>
</reference>